<reference key="1">
    <citation type="journal article" date="2004" name="Proc. Natl. Acad. Sci. U.S.A.">
        <title>Insights into the evolution of Yersinia pestis through whole-genome comparison with Yersinia pseudotuberculosis.</title>
        <authorList>
            <person name="Chain P.S.G."/>
            <person name="Carniel E."/>
            <person name="Larimer F.W."/>
            <person name="Lamerdin J."/>
            <person name="Stoutland P.O."/>
            <person name="Regala W.M."/>
            <person name="Georgescu A.M."/>
            <person name="Vergez L.M."/>
            <person name="Land M.L."/>
            <person name="Motin V.L."/>
            <person name="Brubaker R.R."/>
            <person name="Fowler J."/>
            <person name="Hinnebusch J."/>
            <person name="Marceau M."/>
            <person name="Medigue C."/>
            <person name="Simonet M."/>
            <person name="Chenal-Francisque V."/>
            <person name="Souza B."/>
            <person name="Dacheux D."/>
            <person name="Elliott J.M."/>
            <person name="Derbise A."/>
            <person name="Hauser L.J."/>
            <person name="Garcia E."/>
        </authorList>
    </citation>
    <scope>NUCLEOTIDE SEQUENCE [LARGE SCALE GENOMIC DNA]</scope>
    <source>
        <strain>IP32953</strain>
    </source>
</reference>
<organism>
    <name type="scientific">Yersinia pseudotuberculosis serotype I (strain IP32953)</name>
    <dbReference type="NCBI Taxonomy" id="273123"/>
    <lineage>
        <taxon>Bacteria</taxon>
        <taxon>Pseudomonadati</taxon>
        <taxon>Pseudomonadota</taxon>
        <taxon>Gammaproteobacteria</taxon>
        <taxon>Enterobacterales</taxon>
        <taxon>Yersiniaceae</taxon>
        <taxon>Yersinia</taxon>
    </lineage>
</organism>
<evidence type="ECO:0000255" key="1">
    <source>
        <dbReference type="HAMAP-Rule" id="MF_01456"/>
    </source>
</evidence>
<feature type="chain" id="PRO_0000390288" description="NADH-quinone oxidoreductase subunit K">
    <location>
        <begin position="1"/>
        <end position="100"/>
    </location>
</feature>
<feature type="transmembrane region" description="Helical" evidence="1">
    <location>
        <begin position="4"/>
        <end position="24"/>
    </location>
</feature>
<feature type="transmembrane region" description="Helical" evidence="1">
    <location>
        <begin position="28"/>
        <end position="48"/>
    </location>
</feature>
<feature type="transmembrane region" description="Helical" evidence="1">
    <location>
        <begin position="60"/>
        <end position="80"/>
    </location>
</feature>
<comment type="function">
    <text evidence="1">NDH-1 shuttles electrons from NADH, via FMN and iron-sulfur (Fe-S) centers, to quinones in the respiratory chain. The immediate electron acceptor for the enzyme in this species is believed to be ubiquinone. Couples the redox reaction to proton translocation (for every two electrons transferred, four hydrogen ions are translocated across the cytoplasmic membrane), and thus conserves the redox energy in a proton gradient.</text>
</comment>
<comment type="catalytic activity">
    <reaction evidence="1">
        <text>a quinone + NADH + 5 H(+)(in) = a quinol + NAD(+) + 4 H(+)(out)</text>
        <dbReference type="Rhea" id="RHEA:57888"/>
        <dbReference type="ChEBI" id="CHEBI:15378"/>
        <dbReference type="ChEBI" id="CHEBI:24646"/>
        <dbReference type="ChEBI" id="CHEBI:57540"/>
        <dbReference type="ChEBI" id="CHEBI:57945"/>
        <dbReference type="ChEBI" id="CHEBI:132124"/>
    </reaction>
</comment>
<comment type="subunit">
    <text evidence="1">NDH-1 is composed of 13 different subunits. Subunits NuoA, H, J, K, L, M, N constitute the membrane sector of the complex.</text>
</comment>
<comment type="subcellular location">
    <subcellularLocation>
        <location evidence="1">Cell inner membrane</location>
        <topology evidence="1">Multi-pass membrane protein</topology>
    </subcellularLocation>
</comment>
<comment type="similarity">
    <text evidence="1">Belongs to the complex I subunit 4L family.</text>
</comment>
<dbReference type="EC" id="7.1.1.-" evidence="1"/>
<dbReference type="EMBL" id="BX936398">
    <property type="protein sequence ID" value="CAH21816.1"/>
    <property type="molecule type" value="Genomic_DNA"/>
</dbReference>
<dbReference type="RefSeq" id="WP_002210271.1">
    <property type="nucleotide sequence ID" value="NZ_CP009712.1"/>
</dbReference>
<dbReference type="SMR" id="Q669A9"/>
<dbReference type="GeneID" id="96666077"/>
<dbReference type="KEGG" id="ypo:BZ17_4060"/>
<dbReference type="KEGG" id="yps:YPTB2578"/>
<dbReference type="PATRIC" id="fig|273123.14.peg.4265"/>
<dbReference type="Proteomes" id="UP000001011">
    <property type="component" value="Chromosome"/>
</dbReference>
<dbReference type="GO" id="GO:0030964">
    <property type="term" value="C:NADH dehydrogenase complex"/>
    <property type="evidence" value="ECO:0007669"/>
    <property type="project" value="TreeGrafter"/>
</dbReference>
<dbReference type="GO" id="GO:0005886">
    <property type="term" value="C:plasma membrane"/>
    <property type="evidence" value="ECO:0007669"/>
    <property type="project" value="UniProtKB-SubCell"/>
</dbReference>
<dbReference type="GO" id="GO:0050136">
    <property type="term" value="F:NADH:ubiquinone reductase (non-electrogenic) activity"/>
    <property type="evidence" value="ECO:0007669"/>
    <property type="project" value="UniProtKB-UniRule"/>
</dbReference>
<dbReference type="GO" id="GO:0048038">
    <property type="term" value="F:quinone binding"/>
    <property type="evidence" value="ECO:0007669"/>
    <property type="project" value="UniProtKB-KW"/>
</dbReference>
<dbReference type="GO" id="GO:0042773">
    <property type="term" value="P:ATP synthesis coupled electron transport"/>
    <property type="evidence" value="ECO:0007669"/>
    <property type="project" value="InterPro"/>
</dbReference>
<dbReference type="FunFam" id="1.10.287.3510:FF:000001">
    <property type="entry name" value="NADH-quinone oxidoreductase subunit K"/>
    <property type="match status" value="1"/>
</dbReference>
<dbReference type="Gene3D" id="1.10.287.3510">
    <property type="match status" value="1"/>
</dbReference>
<dbReference type="HAMAP" id="MF_01456">
    <property type="entry name" value="NDH1_NuoK"/>
    <property type="match status" value="1"/>
</dbReference>
<dbReference type="InterPro" id="IPR001133">
    <property type="entry name" value="NADH_UbQ_OxRdtase_chain4L/K"/>
</dbReference>
<dbReference type="InterPro" id="IPR039428">
    <property type="entry name" value="NUOK/Mnh_C1-like"/>
</dbReference>
<dbReference type="NCBIfam" id="NF004319">
    <property type="entry name" value="PRK05715.1-1"/>
    <property type="match status" value="1"/>
</dbReference>
<dbReference type="NCBIfam" id="NF004320">
    <property type="entry name" value="PRK05715.1-2"/>
    <property type="match status" value="1"/>
</dbReference>
<dbReference type="PANTHER" id="PTHR11434:SF16">
    <property type="entry name" value="NADH-UBIQUINONE OXIDOREDUCTASE CHAIN 4L"/>
    <property type="match status" value="1"/>
</dbReference>
<dbReference type="PANTHER" id="PTHR11434">
    <property type="entry name" value="NADH-UBIQUINONE OXIDOREDUCTASE SUBUNIT ND4L"/>
    <property type="match status" value="1"/>
</dbReference>
<dbReference type="Pfam" id="PF00420">
    <property type="entry name" value="Oxidored_q2"/>
    <property type="match status" value="1"/>
</dbReference>
<protein>
    <recommendedName>
        <fullName evidence="1">NADH-quinone oxidoreductase subunit K</fullName>
        <ecNumber evidence="1">7.1.1.-</ecNumber>
    </recommendedName>
    <alternativeName>
        <fullName evidence="1">NADH dehydrogenase I subunit K</fullName>
    </alternativeName>
    <alternativeName>
        <fullName evidence="1">NDH-1 subunit K</fullName>
    </alternativeName>
</protein>
<gene>
    <name evidence="1" type="primary">nuoK</name>
    <name type="ordered locus">YPTB2578</name>
</gene>
<keyword id="KW-0997">Cell inner membrane</keyword>
<keyword id="KW-1003">Cell membrane</keyword>
<keyword id="KW-0472">Membrane</keyword>
<keyword id="KW-0520">NAD</keyword>
<keyword id="KW-0874">Quinone</keyword>
<keyword id="KW-1278">Translocase</keyword>
<keyword id="KW-0812">Transmembrane</keyword>
<keyword id="KW-1133">Transmembrane helix</keyword>
<keyword id="KW-0813">Transport</keyword>
<keyword id="KW-0830">Ubiquinone</keyword>
<proteinExistence type="inferred from homology"/>
<sequence length="100" mass="10880">MIPLQHGLILAAILFVLGLTGLLIRRNLLFMLISLEVMINAAALAFVVAGSYWGQADGQVMYILAITLAAAEASIGLALLLQLYRRRHTLDIDTVSEMRG</sequence>
<accession>Q669A9</accession>
<name>NUOK_YERPS</name>